<reference key="1">
    <citation type="journal article" date="2007" name="Curr. Biol.">
        <title>Reduced genome of the thioautotrophic intracellular symbiont in a deep-sea clam, Calyptogena okutanii.</title>
        <authorList>
            <person name="Kuwahara H."/>
            <person name="Yoshida T."/>
            <person name="Takaki Y."/>
            <person name="Shimamura S."/>
            <person name="Nishi S."/>
            <person name="Harada M."/>
            <person name="Matsuyama K."/>
            <person name="Takishita K."/>
            <person name="Kawato M."/>
            <person name="Uematsu K."/>
            <person name="Fujiwara Y."/>
            <person name="Sato T."/>
            <person name="Kato C."/>
            <person name="Kitagawa M."/>
            <person name="Kato I."/>
            <person name="Maruyama T."/>
        </authorList>
    </citation>
    <scope>NUCLEOTIDE SEQUENCE [LARGE SCALE GENOMIC DNA]</scope>
    <source>
        <strain>HA</strain>
    </source>
</reference>
<keyword id="KW-0067">ATP-binding</keyword>
<keyword id="KW-0143">Chaperone</keyword>
<keyword id="KW-0963">Cytoplasm</keyword>
<keyword id="KW-0547">Nucleotide-binding</keyword>
<keyword id="KW-1185">Reference proteome</keyword>
<keyword id="KW-0346">Stress response</keyword>
<organism>
    <name type="scientific">Vesicomyosocius okutanii subsp. Calyptogena okutanii (strain HA)</name>
    <dbReference type="NCBI Taxonomy" id="412965"/>
    <lineage>
        <taxon>Bacteria</taxon>
        <taxon>Pseudomonadati</taxon>
        <taxon>Pseudomonadota</taxon>
        <taxon>Gammaproteobacteria</taxon>
        <taxon>Candidatus Pseudothioglobaceae</taxon>
        <taxon>Candidatus Vesicomyosocius</taxon>
    </lineage>
</organism>
<protein>
    <recommendedName>
        <fullName evidence="1">Chaperone protein HtpG</fullName>
    </recommendedName>
    <alternativeName>
        <fullName evidence="1">Heat shock protein HtpG</fullName>
    </alternativeName>
    <alternativeName>
        <fullName evidence="1">High temperature protein G</fullName>
    </alternativeName>
</protein>
<proteinExistence type="inferred from homology"/>
<accession>A5CWV5</accession>
<name>HTPG_VESOH</name>
<evidence type="ECO:0000255" key="1">
    <source>
        <dbReference type="HAMAP-Rule" id="MF_00505"/>
    </source>
</evidence>
<gene>
    <name evidence="1" type="primary">htpG</name>
    <name type="ordered locus">COSY_0454</name>
</gene>
<sequence>MTIKQTHSFQTEVSQLLHLMIHSLYSNKEIFLRELISNASDAVDKLKFKSLSDDTLIEGKEALQIHIDVNKDANTITITDNGIGMSEVEVNKNIGTIANSGTKKFLKSLNETQAQDSNLIGQFGVGFYSSFIVSDKVEIITRKAGSKSKKGTKWASTGKGKYSIESIDRPDFGTSVILHIKKDEKEFLDDYRLRNIISKYSDHITVPIMMVKVSEDNKDIEYERINKANAFWAQDKQDLKQKDYDEFYKSLTYDLEAPLTQLHNRVEGNIDYTSLLFIPSKSPFDIWEPKRKGGIKLYAKRVFIMEDNEALMPLYLRFVKGVIDTADLSLNLSREILQDNKVIKAIRKASVKRILSVLEKMAKNKPEDYATFWQEFGMLMKEGVVEDTINKDKIAKLLRFTTNKSKNATQTVTLEHYIKNIQKDQKAIYYITAETYETAKGSPHLENFNQKNIEVLLLSDRVDEWMVSNFREFDGIQLKSIAKGNLEDFDSKEEKKAKEEVAKNFEIVIEKMQKILDSQVKEIKISSRLSESPSCLVADENEMGGNMERIMKSLGQDIPDTKPILEINPTHSLVKKLKTKIDEDLVKVLFDQAVLSEGGQLKDPAEFVKRINKLIN</sequence>
<feature type="chain" id="PRO_1000014963" description="Chaperone protein HtpG">
    <location>
        <begin position="1"/>
        <end position="616"/>
    </location>
</feature>
<feature type="region of interest" description="A; substrate-binding" evidence="1">
    <location>
        <begin position="1"/>
        <end position="334"/>
    </location>
</feature>
<feature type="region of interest" description="B" evidence="1">
    <location>
        <begin position="335"/>
        <end position="549"/>
    </location>
</feature>
<feature type="region of interest" description="C" evidence="1">
    <location>
        <begin position="550"/>
        <end position="616"/>
    </location>
</feature>
<dbReference type="EMBL" id="AP009247">
    <property type="protein sequence ID" value="BAF61573.1"/>
    <property type="molecule type" value="Genomic_DNA"/>
</dbReference>
<dbReference type="RefSeq" id="WP_011929843.1">
    <property type="nucleotide sequence ID" value="NC_009465.1"/>
</dbReference>
<dbReference type="SMR" id="A5CWV5"/>
<dbReference type="STRING" id="412965.COSY_0454"/>
<dbReference type="KEGG" id="vok:COSY_0454"/>
<dbReference type="eggNOG" id="COG0326">
    <property type="taxonomic scope" value="Bacteria"/>
</dbReference>
<dbReference type="HOGENOM" id="CLU_006684_3_0_6"/>
<dbReference type="OrthoDB" id="9802640at2"/>
<dbReference type="Proteomes" id="UP000000247">
    <property type="component" value="Chromosome"/>
</dbReference>
<dbReference type="GO" id="GO:0005737">
    <property type="term" value="C:cytoplasm"/>
    <property type="evidence" value="ECO:0007669"/>
    <property type="project" value="UniProtKB-SubCell"/>
</dbReference>
<dbReference type="GO" id="GO:0005524">
    <property type="term" value="F:ATP binding"/>
    <property type="evidence" value="ECO:0007669"/>
    <property type="project" value="UniProtKB-UniRule"/>
</dbReference>
<dbReference type="GO" id="GO:0016887">
    <property type="term" value="F:ATP hydrolysis activity"/>
    <property type="evidence" value="ECO:0007669"/>
    <property type="project" value="InterPro"/>
</dbReference>
<dbReference type="GO" id="GO:0140662">
    <property type="term" value="F:ATP-dependent protein folding chaperone"/>
    <property type="evidence" value="ECO:0007669"/>
    <property type="project" value="InterPro"/>
</dbReference>
<dbReference type="GO" id="GO:0051082">
    <property type="term" value="F:unfolded protein binding"/>
    <property type="evidence" value="ECO:0007669"/>
    <property type="project" value="UniProtKB-UniRule"/>
</dbReference>
<dbReference type="CDD" id="cd16927">
    <property type="entry name" value="HATPase_Hsp90-like"/>
    <property type="match status" value="1"/>
</dbReference>
<dbReference type="FunFam" id="3.30.230.80:FF:000002">
    <property type="entry name" value="Molecular chaperone HtpG"/>
    <property type="match status" value="1"/>
</dbReference>
<dbReference type="FunFam" id="3.30.565.10:FF:000009">
    <property type="entry name" value="Molecular chaperone HtpG"/>
    <property type="match status" value="1"/>
</dbReference>
<dbReference type="Gene3D" id="3.30.230.80">
    <property type="match status" value="1"/>
</dbReference>
<dbReference type="Gene3D" id="3.40.50.11260">
    <property type="match status" value="1"/>
</dbReference>
<dbReference type="Gene3D" id="1.20.120.790">
    <property type="entry name" value="Heat shock protein 90, C-terminal domain"/>
    <property type="match status" value="1"/>
</dbReference>
<dbReference type="Gene3D" id="3.30.565.10">
    <property type="entry name" value="Histidine kinase-like ATPase, C-terminal domain"/>
    <property type="match status" value="1"/>
</dbReference>
<dbReference type="HAMAP" id="MF_00505">
    <property type="entry name" value="HSP90"/>
    <property type="match status" value="1"/>
</dbReference>
<dbReference type="InterPro" id="IPR036890">
    <property type="entry name" value="HATPase_C_sf"/>
</dbReference>
<dbReference type="InterPro" id="IPR019805">
    <property type="entry name" value="Heat_shock_protein_90_CS"/>
</dbReference>
<dbReference type="InterPro" id="IPR037196">
    <property type="entry name" value="HSP90_C"/>
</dbReference>
<dbReference type="InterPro" id="IPR001404">
    <property type="entry name" value="Hsp90_fam"/>
</dbReference>
<dbReference type="InterPro" id="IPR020575">
    <property type="entry name" value="Hsp90_N"/>
</dbReference>
<dbReference type="InterPro" id="IPR020568">
    <property type="entry name" value="Ribosomal_Su5_D2-typ_SF"/>
</dbReference>
<dbReference type="NCBIfam" id="NF003555">
    <property type="entry name" value="PRK05218.1"/>
    <property type="match status" value="1"/>
</dbReference>
<dbReference type="PANTHER" id="PTHR11528">
    <property type="entry name" value="HEAT SHOCK PROTEIN 90 FAMILY MEMBER"/>
    <property type="match status" value="1"/>
</dbReference>
<dbReference type="Pfam" id="PF13589">
    <property type="entry name" value="HATPase_c_3"/>
    <property type="match status" value="1"/>
</dbReference>
<dbReference type="Pfam" id="PF00183">
    <property type="entry name" value="HSP90"/>
    <property type="match status" value="1"/>
</dbReference>
<dbReference type="PIRSF" id="PIRSF002583">
    <property type="entry name" value="Hsp90"/>
    <property type="match status" value="1"/>
</dbReference>
<dbReference type="PRINTS" id="PR00775">
    <property type="entry name" value="HEATSHOCK90"/>
</dbReference>
<dbReference type="SMART" id="SM00387">
    <property type="entry name" value="HATPase_c"/>
    <property type="match status" value="1"/>
</dbReference>
<dbReference type="SUPFAM" id="SSF55874">
    <property type="entry name" value="ATPase domain of HSP90 chaperone/DNA topoisomerase II/histidine kinase"/>
    <property type="match status" value="1"/>
</dbReference>
<dbReference type="SUPFAM" id="SSF110942">
    <property type="entry name" value="HSP90 C-terminal domain"/>
    <property type="match status" value="1"/>
</dbReference>
<dbReference type="SUPFAM" id="SSF54211">
    <property type="entry name" value="Ribosomal protein S5 domain 2-like"/>
    <property type="match status" value="1"/>
</dbReference>
<dbReference type="PROSITE" id="PS00298">
    <property type="entry name" value="HSP90"/>
    <property type="match status" value="1"/>
</dbReference>
<comment type="function">
    <text evidence="1">Molecular chaperone. Has ATPase activity.</text>
</comment>
<comment type="subunit">
    <text evidence="1">Homodimer.</text>
</comment>
<comment type="subcellular location">
    <subcellularLocation>
        <location evidence="1">Cytoplasm</location>
    </subcellularLocation>
</comment>
<comment type="similarity">
    <text evidence="1">Belongs to the heat shock protein 90 family.</text>
</comment>